<reference key="1">
    <citation type="journal article" date="2004" name="Proc. Natl. Acad. Sci. U.S.A.">
        <title>Genomic plasticity of the causative agent of melioidosis, Burkholderia pseudomallei.</title>
        <authorList>
            <person name="Holden M.T.G."/>
            <person name="Titball R.W."/>
            <person name="Peacock S.J."/>
            <person name="Cerdeno-Tarraga A.-M."/>
            <person name="Atkins T."/>
            <person name="Crossman L.C."/>
            <person name="Pitt T."/>
            <person name="Churcher C."/>
            <person name="Mungall K.L."/>
            <person name="Bentley S.D."/>
            <person name="Sebaihia M."/>
            <person name="Thomson N.R."/>
            <person name="Bason N."/>
            <person name="Beacham I.R."/>
            <person name="Brooks K."/>
            <person name="Brown K.A."/>
            <person name="Brown N.F."/>
            <person name="Challis G.L."/>
            <person name="Cherevach I."/>
            <person name="Chillingworth T."/>
            <person name="Cronin A."/>
            <person name="Crossett B."/>
            <person name="Davis P."/>
            <person name="DeShazer D."/>
            <person name="Feltwell T."/>
            <person name="Fraser A."/>
            <person name="Hance Z."/>
            <person name="Hauser H."/>
            <person name="Holroyd S."/>
            <person name="Jagels K."/>
            <person name="Keith K.E."/>
            <person name="Maddison M."/>
            <person name="Moule S."/>
            <person name="Price C."/>
            <person name="Quail M.A."/>
            <person name="Rabbinowitsch E."/>
            <person name="Rutherford K."/>
            <person name="Sanders M."/>
            <person name="Simmonds M."/>
            <person name="Songsivilai S."/>
            <person name="Stevens K."/>
            <person name="Tumapa S."/>
            <person name="Vesaratchavest M."/>
            <person name="Whitehead S."/>
            <person name="Yeats C."/>
            <person name="Barrell B.G."/>
            <person name="Oyston P.C.F."/>
            <person name="Parkhill J."/>
        </authorList>
    </citation>
    <scope>NUCLEOTIDE SEQUENCE [LARGE SCALE GENOMIC DNA]</scope>
    <source>
        <strain>K96243</strain>
    </source>
</reference>
<protein>
    <recommendedName>
        <fullName evidence="1">Holliday junction branch migration complex subunit RuvA</fullName>
    </recommendedName>
</protein>
<dbReference type="EMBL" id="BX571965">
    <property type="protein sequence ID" value="CAH36908.1"/>
    <property type="molecule type" value="Genomic_DNA"/>
</dbReference>
<dbReference type="RefSeq" id="WP_004194029.1">
    <property type="nucleotide sequence ID" value="NZ_CP009538.1"/>
</dbReference>
<dbReference type="RefSeq" id="YP_109492.1">
    <property type="nucleotide sequence ID" value="NC_006350.1"/>
</dbReference>
<dbReference type="SMR" id="Q63QX6"/>
<dbReference type="STRING" id="272560.BPSL2898"/>
<dbReference type="GeneID" id="93061493"/>
<dbReference type="KEGG" id="bps:BPSL2898"/>
<dbReference type="PATRIC" id="fig|272560.51.peg.2391"/>
<dbReference type="eggNOG" id="COG0632">
    <property type="taxonomic scope" value="Bacteria"/>
</dbReference>
<dbReference type="Proteomes" id="UP000000605">
    <property type="component" value="Chromosome 1"/>
</dbReference>
<dbReference type="GO" id="GO:0005737">
    <property type="term" value="C:cytoplasm"/>
    <property type="evidence" value="ECO:0007669"/>
    <property type="project" value="UniProtKB-SubCell"/>
</dbReference>
<dbReference type="GO" id="GO:0009379">
    <property type="term" value="C:Holliday junction helicase complex"/>
    <property type="evidence" value="ECO:0007669"/>
    <property type="project" value="InterPro"/>
</dbReference>
<dbReference type="GO" id="GO:0048476">
    <property type="term" value="C:Holliday junction resolvase complex"/>
    <property type="evidence" value="ECO:0007669"/>
    <property type="project" value="UniProtKB-UniRule"/>
</dbReference>
<dbReference type="GO" id="GO:0005524">
    <property type="term" value="F:ATP binding"/>
    <property type="evidence" value="ECO:0007669"/>
    <property type="project" value="InterPro"/>
</dbReference>
<dbReference type="GO" id="GO:0000400">
    <property type="term" value="F:four-way junction DNA binding"/>
    <property type="evidence" value="ECO:0007669"/>
    <property type="project" value="UniProtKB-UniRule"/>
</dbReference>
<dbReference type="GO" id="GO:0009378">
    <property type="term" value="F:four-way junction helicase activity"/>
    <property type="evidence" value="ECO:0007669"/>
    <property type="project" value="InterPro"/>
</dbReference>
<dbReference type="GO" id="GO:0006310">
    <property type="term" value="P:DNA recombination"/>
    <property type="evidence" value="ECO:0007669"/>
    <property type="project" value="UniProtKB-UniRule"/>
</dbReference>
<dbReference type="GO" id="GO:0006281">
    <property type="term" value="P:DNA repair"/>
    <property type="evidence" value="ECO:0007669"/>
    <property type="project" value="UniProtKB-UniRule"/>
</dbReference>
<dbReference type="CDD" id="cd14332">
    <property type="entry name" value="UBA_RuvA_C"/>
    <property type="match status" value="1"/>
</dbReference>
<dbReference type="Gene3D" id="1.10.150.20">
    <property type="entry name" value="5' to 3' exonuclease, C-terminal subdomain"/>
    <property type="match status" value="1"/>
</dbReference>
<dbReference type="Gene3D" id="1.10.8.10">
    <property type="entry name" value="DNA helicase RuvA subunit, C-terminal domain"/>
    <property type="match status" value="1"/>
</dbReference>
<dbReference type="Gene3D" id="2.40.50.140">
    <property type="entry name" value="Nucleic acid-binding proteins"/>
    <property type="match status" value="1"/>
</dbReference>
<dbReference type="HAMAP" id="MF_00031">
    <property type="entry name" value="DNA_HJ_migration_RuvA"/>
    <property type="match status" value="1"/>
</dbReference>
<dbReference type="InterPro" id="IPR013849">
    <property type="entry name" value="DNA_helicase_Holl-junc_RuvA_I"/>
</dbReference>
<dbReference type="InterPro" id="IPR003583">
    <property type="entry name" value="Hlx-hairpin-Hlx_DNA-bd_motif"/>
</dbReference>
<dbReference type="InterPro" id="IPR012340">
    <property type="entry name" value="NA-bd_OB-fold"/>
</dbReference>
<dbReference type="InterPro" id="IPR000085">
    <property type="entry name" value="RuvA"/>
</dbReference>
<dbReference type="InterPro" id="IPR010994">
    <property type="entry name" value="RuvA_2-like"/>
</dbReference>
<dbReference type="InterPro" id="IPR011114">
    <property type="entry name" value="RuvA_C"/>
</dbReference>
<dbReference type="InterPro" id="IPR036267">
    <property type="entry name" value="RuvA_C_sf"/>
</dbReference>
<dbReference type="NCBIfam" id="TIGR00084">
    <property type="entry name" value="ruvA"/>
    <property type="match status" value="1"/>
</dbReference>
<dbReference type="Pfam" id="PF14520">
    <property type="entry name" value="HHH_5"/>
    <property type="match status" value="1"/>
</dbReference>
<dbReference type="Pfam" id="PF07499">
    <property type="entry name" value="RuvA_C"/>
    <property type="match status" value="1"/>
</dbReference>
<dbReference type="Pfam" id="PF01330">
    <property type="entry name" value="RuvA_N"/>
    <property type="match status" value="1"/>
</dbReference>
<dbReference type="SMART" id="SM00278">
    <property type="entry name" value="HhH1"/>
    <property type="match status" value="2"/>
</dbReference>
<dbReference type="SUPFAM" id="SSF46929">
    <property type="entry name" value="DNA helicase RuvA subunit, C-terminal domain"/>
    <property type="match status" value="1"/>
</dbReference>
<dbReference type="SUPFAM" id="SSF50249">
    <property type="entry name" value="Nucleic acid-binding proteins"/>
    <property type="match status" value="1"/>
</dbReference>
<dbReference type="SUPFAM" id="SSF47781">
    <property type="entry name" value="RuvA domain 2-like"/>
    <property type="match status" value="1"/>
</dbReference>
<gene>
    <name evidence="1" type="primary">ruvA</name>
    <name type="ordered locus">BPSL2898</name>
</gene>
<organism>
    <name type="scientific">Burkholderia pseudomallei (strain K96243)</name>
    <dbReference type="NCBI Taxonomy" id="272560"/>
    <lineage>
        <taxon>Bacteria</taxon>
        <taxon>Pseudomonadati</taxon>
        <taxon>Pseudomonadota</taxon>
        <taxon>Betaproteobacteria</taxon>
        <taxon>Burkholderiales</taxon>
        <taxon>Burkholderiaceae</taxon>
        <taxon>Burkholderia</taxon>
        <taxon>pseudomallei group</taxon>
    </lineage>
</organism>
<evidence type="ECO:0000255" key="1">
    <source>
        <dbReference type="HAMAP-Rule" id="MF_00031"/>
    </source>
</evidence>
<name>RUVA_BURPS</name>
<sequence>MIGRIAGTLLEKNPPHILVDCNGVGYEVDVPMSTFYNLPHTGEKVVLLTQLIVREDAHLLYGFLTPPERSTFRELLKITGVGARMALAVLSGMSVAELSQAVTLQDAARLTRVPGIGKKTAERLLLELKGKLGADLGPLAGAASPSDHATDILNALVALGYSEKEALAAIKNVPAGTGVSEGIKLSLKALSKA</sequence>
<comment type="function">
    <text evidence="1">The RuvA-RuvB-RuvC complex processes Holliday junction (HJ) DNA during genetic recombination and DNA repair, while the RuvA-RuvB complex plays an important role in the rescue of blocked DNA replication forks via replication fork reversal (RFR). RuvA specifically binds to HJ cruciform DNA, conferring on it an open structure. The RuvB hexamer acts as an ATP-dependent pump, pulling dsDNA into and through the RuvAB complex. HJ branch migration allows RuvC to scan DNA until it finds its consensus sequence, where it cleaves and resolves the cruciform DNA.</text>
</comment>
<comment type="subunit">
    <text evidence="1">Homotetramer. Forms an RuvA(8)-RuvB(12)-Holliday junction (HJ) complex. HJ DNA is sandwiched between 2 RuvA tetramers; dsDNA enters through RuvA and exits via RuvB. An RuvB hexamer assembles on each DNA strand where it exits the tetramer. Each RuvB hexamer is contacted by two RuvA subunits (via domain III) on 2 adjacent RuvB subunits; this complex drives branch migration. In the full resolvosome a probable DNA-RuvA(4)-RuvB(12)-RuvC(2) complex forms which resolves the HJ.</text>
</comment>
<comment type="subcellular location">
    <subcellularLocation>
        <location evidence="1">Cytoplasm</location>
    </subcellularLocation>
</comment>
<comment type="domain">
    <text evidence="1">Has three domains with a flexible linker between the domains II and III and assumes an 'L' shape. Domain III is highly mobile and contacts RuvB.</text>
</comment>
<comment type="similarity">
    <text evidence="1">Belongs to the RuvA family.</text>
</comment>
<accession>Q63QX6</accession>
<proteinExistence type="inferred from homology"/>
<keyword id="KW-0963">Cytoplasm</keyword>
<keyword id="KW-0227">DNA damage</keyword>
<keyword id="KW-0233">DNA recombination</keyword>
<keyword id="KW-0234">DNA repair</keyword>
<keyword id="KW-0238">DNA-binding</keyword>
<keyword id="KW-1185">Reference proteome</keyword>
<feature type="chain" id="PRO_0000224850" description="Holliday junction branch migration complex subunit RuvA">
    <location>
        <begin position="1"/>
        <end position="193"/>
    </location>
</feature>
<feature type="region of interest" description="Domain I" evidence="1">
    <location>
        <begin position="1"/>
        <end position="64"/>
    </location>
</feature>
<feature type="region of interest" description="Domain II" evidence="1">
    <location>
        <begin position="65"/>
        <end position="139"/>
    </location>
</feature>
<feature type="region of interest" description="Flexible linker" evidence="1">
    <location>
        <begin position="139"/>
        <end position="143"/>
    </location>
</feature>
<feature type="region of interest" description="Domain III" evidence="1">
    <location>
        <begin position="144"/>
        <end position="193"/>
    </location>
</feature>